<dbReference type="EMBL" id="Z71456">
    <property type="protein sequence ID" value="CAA96072.1"/>
    <property type="molecule type" value="Genomic_DNA"/>
</dbReference>
<dbReference type="EMBL" id="BK006947">
    <property type="protein sequence ID" value="DAA10372.1"/>
    <property type="molecule type" value="Genomic_DNA"/>
</dbReference>
<dbReference type="RefSeq" id="NP_014219.1">
    <property type="nucleotide sequence ID" value="NM_001183018.1"/>
</dbReference>
<dbReference type="SMR" id="P53879"/>
<dbReference type="BioGRID" id="35652">
    <property type="interactions" value="142"/>
</dbReference>
<dbReference type="DIP" id="DIP-2874N"/>
<dbReference type="FunCoup" id="P53879">
    <property type="interactions" value="280"/>
</dbReference>
<dbReference type="IntAct" id="P53879">
    <property type="interactions" value="11"/>
</dbReference>
<dbReference type="MINT" id="P53879"/>
<dbReference type="STRING" id="4932.YNL180C"/>
<dbReference type="iPTMnet" id="P53879"/>
<dbReference type="PaxDb" id="4932-YNL180C"/>
<dbReference type="PeptideAtlas" id="P53879"/>
<dbReference type="EnsemblFungi" id="YNL180C_mRNA">
    <property type="protein sequence ID" value="YNL180C"/>
    <property type="gene ID" value="YNL180C"/>
</dbReference>
<dbReference type="GeneID" id="855541"/>
<dbReference type="KEGG" id="sce:YNL180C"/>
<dbReference type="AGR" id="SGD:S000005124"/>
<dbReference type="SGD" id="S000005124">
    <property type="gene designation" value="RHO5"/>
</dbReference>
<dbReference type="VEuPathDB" id="FungiDB:YNL180C"/>
<dbReference type="eggNOG" id="KOG0393">
    <property type="taxonomic scope" value="Eukaryota"/>
</dbReference>
<dbReference type="HOGENOM" id="CLU_041217_21_1_1"/>
<dbReference type="InParanoid" id="P53879"/>
<dbReference type="OMA" id="EHASFAN"/>
<dbReference type="OrthoDB" id="8830751at2759"/>
<dbReference type="BioCyc" id="YEAST:G3O-33191-MONOMER"/>
<dbReference type="Reactome" id="R-SCE-9013406">
    <property type="pathway name" value="RHOQ GTPase cycle"/>
</dbReference>
<dbReference type="Reactome" id="R-SCE-9013409">
    <property type="pathway name" value="RHOJ GTPase cycle"/>
</dbReference>
<dbReference type="Reactome" id="R-SCE-9013420">
    <property type="pathway name" value="RHOU GTPase cycle"/>
</dbReference>
<dbReference type="Reactome" id="R-SCE-9013424">
    <property type="pathway name" value="RHOV GTPase cycle"/>
</dbReference>
<dbReference type="BioGRID-ORCS" id="855541">
    <property type="hits" value="3 hits in 10 CRISPR screens"/>
</dbReference>
<dbReference type="PRO" id="PR:P53879"/>
<dbReference type="Proteomes" id="UP000002311">
    <property type="component" value="Chromosome XIV"/>
</dbReference>
<dbReference type="RNAct" id="P53879">
    <property type="molecule type" value="protein"/>
</dbReference>
<dbReference type="GO" id="GO:0042995">
    <property type="term" value="C:cell projection"/>
    <property type="evidence" value="ECO:0000318"/>
    <property type="project" value="GO_Central"/>
</dbReference>
<dbReference type="GO" id="GO:0005737">
    <property type="term" value="C:cytoplasm"/>
    <property type="evidence" value="ECO:0007005"/>
    <property type="project" value="SGD"/>
</dbReference>
<dbReference type="GO" id="GO:0031410">
    <property type="term" value="C:cytoplasmic vesicle"/>
    <property type="evidence" value="ECO:0000318"/>
    <property type="project" value="GO_Central"/>
</dbReference>
<dbReference type="GO" id="GO:0005856">
    <property type="term" value="C:cytoskeleton"/>
    <property type="evidence" value="ECO:0000318"/>
    <property type="project" value="GO_Central"/>
</dbReference>
<dbReference type="GO" id="GO:0012505">
    <property type="term" value="C:endomembrane system"/>
    <property type="evidence" value="ECO:0000314"/>
    <property type="project" value="SGD"/>
</dbReference>
<dbReference type="GO" id="GO:0000329">
    <property type="term" value="C:fungal-type vacuole membrane"/>
    <property type="evidence" value="ECO:0000314"/>
    <property type="project" value="SGD"/>
</dbReference>
<dbReference type="GO" id="GO:0005739">
    <property type="term" value="C:mitochondrion"/>
    <property type="evidence" value="ECO:0007669"/>
    <property type="project" value="UniProtKB-SubCell"/>
</dbReference>
<dbReference type="GO" id="GO:0005634">
    <property type="term" value="C:nucleus"/>
    <property type="evidence" value="ECO:0007005"/>
    <property type="project" value="SGD"/>
</dbReference>
<dbReference type="GO" id="GO:0005886">
    <property type="term" value="C:plasma membrane"/>
    <property type="evidence" value="ECO:0000314"/>
    <property type="project" value="SGD"/>
</dbReference>
<dbReference type="GO" id="GO:0005525">
    <property type="term" value="F:GTP binding"/>
    <property type="evidence" value="ECO:0000318"/>
    <property type="project" value="GO_Central"/>
</dbReference>
<dbReference type="GO" id="GO:0003924">
    <property type="term" value="F:GTPase activity"/>
    <property type="evidence" value="ECO:0000314"/>
    <property type="project" value="SGD"/>
</dbReference>
<dbReference type="GO" id="GO:0019901">
    <property type="term" value="F:protein kinase binding"/>
    <property type="evidence" value="ECO:0000318"/>
    <property type="project" value="GO_Central"/>
</dbReference>
<dbReference type="GO" id="GO:0007015">
    <property type="term" value="P:actin filament organization"/>
    <property type="evidence" value="ECO:0000318"/>
    <property type="project" value="GO_Central"/>
</dbReference>
<dbReference type="GO" id="GO:0006915">
    <property type="term" value="P:apoptotic process"/>
    <property type="evidence" value="ECO:0000315"/>
    <property type="project" value="SGD"/>
</dbReference>
<dbReference type="GO" id="GO:0034599">
    <property type="term" value="P:cellular response to oxidative stress"/>
    <property type="evidence" value="ECO:0000315"/>
    <property type="project" value="SGD"/>
</dbReference>
<dbReference type="GO" id="GO:0030865">
    <property type="term" value="P:cortical cytoskeleton organization"/>
    <property type="evidence" value="ECO:0000318"/>
    <property type="project" value="GO_Central"/>
</dbReference>
<dbReference type="GO" id="GO:0007163">
    <property type="term" value="P:establishment or maintenance of cell polarity"/>
    <property type="evidence" value="ECO:0000318"/>
    <property type="project" value="GO_Central"/>
</dbReference>
<dbReference type="GO" id="GO:0032956">
    <property type="term" value="P:regulation of actin cytoskeleton organization"/>
    <property type="evidence" value="ECO:0000318"/>
    <property type="project" value="GO_Central"/>
</dbReference>
<dbReference type="GO" id="GO:0008360">
    <property type="term" value="P:regulation of cell shape"/>
    <property type="evidence" value="ECO:0000318"/>
    <property type="project" value="GO_Central"/>
</dbReference>
<dbReference type="GO" id="GO:0007165">
    <property type="term" value="P:signal transduction"/>
    <property type="evidence" value="ECO:0000318"/>
    <property type="project" value="GO_Central"/>
</dbReference>
<dbReference type="GO" id="GO:0007264">
    <property type="term" value="P:small GTPase-mediated signal transduction"/>
    <property type="evidence" value="ECO:0007669"/>
    <property type="project" value="InterPro"/>
</dbReference>
<dbReference type="CDD" id="cd00157">
    <property type="entry name" value="Rho"/>
    <property type="match status" value="1"/>
</dbReference>
<dbReference type="FunFam" id="3.40.50.300:FF:001179">
    <property type="entry name" value="Rho family GTPase"/>
    <property type="match status" value="1"/>
</dbReference>
<dbReference type="Gene3D" id="3.40.50.300">
    <property type="entry name" value="P-loop containing nucleotide triphosphate hydrolases"/>
    <property type="match status" value="1"/>
</dbReference>
<dbReference type="InterPro" id="IPR027417">
    <property type="entry name" value="P-loop_NTPase"/>
</dbReference>
<dbReference type="InterPro" id="IPR005225">
    <property type="entry name" value="Small_GTP-bd"/>
</dbReference>
<dbReference type="InterPro" id="IPR001806">
    <property type="entry name" value="Small_GTPase"/>
</dbReference>
<dbReference type="InterPro" id="IPR003578">
    <property type="entry name" value="Small_GTPase_Rho"/>
</dbReference>
<dbReference type="NCBIfam" id="TIGR00231">
    <property type="entry name" value="small_GTP"/>
    <property type="match status" value="1"/>
</dbReference>
<dbReference type="PANTHER" id="PTHR24072">
    <property type="entry name" value="RHO FAMILY GTPASE"/>
    <property type="match status" value="1"/>
</dbReference>
<dbReference type="Pfam" id="PF00071">
    <property type="entry name" value="Ras"/>
    <property type="match status" value="2"/>
</dbReference>
<dbReference type="PRINTS" id="PR00449">
    <property type="entry name" value="RASTRNSFRMNG"/>
</dbReference>
<dbReference type="SMART" id="SM00175">
    <property type="entry name" value="RAB"/>
    <property type="match status" value="1"/>
</dbReference>
<dbReference type="SMART" id="SM00173">
    <property type="entry name" value="RAS"/>
    <property type="match status" value="1"/>
</dbReference>
<dbReference type="SMART" id="SM00174">
    <property type="entry name" value="RHO"/>
    <property type="match status" value="1"/>
</dbReference>
<dbReference type="SUPFAM" id="SSF52540">
    <property type="entry name" value="P-loop containing nucleoside triphosphate hydrolases"/>
    <property type="match status" value="1"/>
</dbReference>
<dbReference type="PROSITE" id="PS51420">
    <property type="entry name" value="RHO"/>
    <property type="match status" value="1"/>
</dbReference>
<protein>
    <recommendedName>
        <fullName evidence="9">GTP-binding protein RHO5</fullName>
    </recommendedName>
</protein>
<reference key="1">
    <citation type="journal article" date="1997" name="Nature">
        <title>The nucleotide sequence of Saccharomyces cerevisiae chromosome XIV and its evolutionary implications.</title>
        <authorList>
            <person name="Philippsen P."/>
            <person name="Kleine K."/>
            <person name="Poehlmann R."/>
            <person name="Duesterhoeft A."/>
            <person name="Hamberg K."/>
            <person name="Hegemann J.H."/>
            <person name="Obermaier B."/>
            <person name="Urrestarazu L.A."/>
            <person name="Aert R."/>
            <person name="Albermann K."/>
            <person name="Altmann R."/>
            <person name="Andre B."/>
            <person name="Baladron V."/>
            <person name="Ballesta J.P.G."/>
            <person name="Becam A.-M."/>
            <person name="Beinhauer J.D."/>
            <person name="Boskovic J."/>
            <person name="Buitrago M.J."/>
            <person name="Bussereau F."/>
            <person name="Coster F."/>
            <person name="Crouzet M."/>
            <person name="D'Angelo M."/>
            <person name="Dal Pero F."/>
            <person name="De Antoni A."/>
            <person name="del Rey F."/>
            <person name="Doignon F."/>
            <person name="Domdey H."/>
            <person name="Dubois E."/>
            <person name="Fiedler T.A."/>
            <person name="Fleig U."/>
            <person name="Floeth M."/>
            <person name="Fritz C."/>
            <person name="Gaillardin C."/>
            <person name="Garcia-Cantalejo J.M."/>
            <person name="Glansdorff N."/>
            <person name="Goffeau A."/>
            <person name="Gueldener U."/>
            <person name="Herbert C.J."/>
            <person name="Heumann K."/>
            <person name="Heuss-Neitzel D."/>
            <person name="Hilbert H."/>
            <person name="Hinni K."/>
            <person name="Iraqui Houssaini I."/>
            <person name="Jacquet M."/>
            <person name="Jimenez A."/>
            <person name="Jonniaux J.-L."/>
            <person name="Karpfinger-Hartl L."/>
            <person name="Lanfranchi G."/>
            <person name="Lepingle A."/>
            <person name="Levesque H."/>
            <person name="Lyck R."/>
            <person name="Maftahi M."/>
            <person name="Mallet L."/>
            <person name="Maurer C.T.C."/>
            <person name="Messenguy F."/>
            <person name="Mewes H.-W."/>
            <person name="Moestl D."/>
            <person name="Nasr F."/>
            <person name="Nicaud J.-M."/>
            <person name="Niedenthal R.K."/>
            <person name="Pandolfo D."/>
            <person name="Pierard A."/>
            <person name="Piravandi E."/>
            <person name="Planta R.J."/>
            <person name="Pohl T.M."/>
            <person name="Purnelle B."/>
            <person name="Rebischung C."/>
            <person name="Remacha M.A."/>
            <person name="Revuelta J.L."/>
            <person name="Rinke M."/>
            <person name="Saiz J.E."/>
            <person name="Sartorello F."/>
            <person name="Scherens B."/>
            <person name="Sen-Gupta M."/>
            <person name="Soler-Mira A."/>
            <person name="Urbanus J.H.M."/>
            <person name="Valle G."/>
            <person name="Van Dyck L."/>
            <person name="Verhasselt P."/>
            <person name="Vierendeels F."/>
            <person name="Vissers S."/>
            <person name="Voet M."/>
            <person name="Volckaert G."/>
            <person name="Wach A."/>
            <person name="Wambutt R."/>
            <person name="Wedler H."/>
            <person name="Zollner A."/>
            <person name="Hani J."/>
        </authorList>
    </citation>
    <scope>NUCLEOTIDE SEQUENCE [LARGE SCALE GENOMIC DNA]</scope>
    <source>
        <strain>ATCC 204508 / S288c</strain>
    </source>
</reference>
<reference key="2">
    <citation type="journal article" date="2014" name="G3 (Bethesda)">
        <title>The reference genome sequence of Saccharomyces cerevisiae: Then and now.</title>
        <authorList>
            <person name="Engel S.R."/>
            <person name="Dietrich F.S."/>
            <person name="Fisk D.G."/>
            <person name="Binkley G."/>
            <person name="Balakrishnan R."/>
            <person name="Costanzo M.C."/>
            <person name="Dwight S.S."/>
            <person name="Hitz B.C."/>
            <person name="Karra K."/>
            <person name="Nash R.S."/>
            <person name="Weng S."/>
            <person name="Wong E.D."/>
            <person name="Lloyd P."/>
            <person name="Skrzypek M.S."/>
            <person name="Miyasato S.R."/>
            <person name="Simison M."/>
            <person name="Cherry J.M."/>
        </authorList>
    </citation>
    <scope>GENOME REANNOTATION</scope>
    <source>
        <strain>ATCC 204508 / S288c</strain>
    </source>
</reference>
<reference key="3">
    <citation type="journal article" date="2002" name="J. Cell Sci.">
        <title>Rho5p downregulates the yeast cell integrity pathway.</title>
        <authorList>
            <person name="Schmitz H.-P."/>
            <person name="Huppert S."/>
            <person name="Lorberg A."/>
            <person name="Heinisch J.J."/>
        </authorList>
    </citation>
    <scope>FUNCTION</scope>
    <scope>MUTAGENESIS OF GLN-91</scope>
</reference>
<reference key="4">
    <citation type="journal article" date="2001" name="FEBS Lett.">
        <title>Functional characterization of the Bag7, Lrg1 and Rgd2 RhoGAP proteins from Saccharomyces cerevisiae.</title>
        <authorList>
            <person name="Roumanie O."/>
            <person name="Weinachter C."/>
            <person name="Larrieu I."/>
            <person name="Crouzet M."/>
            <person name="Doignon F."/>
        </authorList>
    </citation>
    <scope>INTERACTION WITH RGD2</scope>
</reference>
<reference key="5">
    <citation type="journal article" date="2003" name="Nature">
        <title>Global analysis of protein expression in yeast.</title>
        <authorList>
            <person name="Ghaemmaghami S."/>
            <person name="Huh W.-K."/>
            <person name="Bower K."/>
            <person name="Howson R.W."/>
            <person name="Belle A."/>
            <person name="Dephoure N."/>
            <person name="O'Shea E.K."/>
            <person name="Weissman J.S."/>
        </authorList>
    </citation>
    <scope>LEVEL OF PROTEIN EXPRESSION [LARGE SCALE ANALYSIS]</scope>
</reference>
<reference key="6">
    <citation type="journal article" date="2007" name="J. Proteome Res.">
        <title>Large-scale phosphorylation analysis of alpha-factor-arrested Saccharomyces cerevisiae.</title>
        <authorList>
            <person name="Li X."/>
            <person name="Gerber S.A."/>
            <person name="Rudner A.D."/>
            <person name="Beausoleil S.A."/>
            <person name="Haas W."/>
            <person name="Villen J."/>
            <person name="Elias J.E."/>
            <person name="Gygi S.P."/>
        </authorList>
    </citation>
    <scope>PHOSPHORYLATION [LARGE SCALE ANALYSIS] AT SER-223</scope>
    <scope>IDENTIFICATION BY MASS SPECTROMETRY [LARGE SCALE ANALYSIS]</scope>
    <source>
        <strain>ADR376</strain>
    </source>
</reference>
<reference key="7">
    <citation type="journal article" date="2008" name="Mol. Cell. Proteomics">
        <title>A multidimensional chromatography technology for in-depth phosphoproteome analysis.</title>
        <authorList>
            <person name="Albuquerque C.P."/>
            <person name="Smolka M.B."/>
            <person name="Payne S.H."/>
            <person name="Bafna V."/>
            <person name="Eng J."/>
            <person name="Zhou H."/>
        </authorList>
    </citation>
    <scope>PHOSPHORYLATION [LARGE SCALE ANALYSIS] AT SER-223</scope>
    <scope>IDENTIFICATION BY MASS SPECTROMETRY [LARGE SCALE ANALYSIS]</scope>
</reference>
<reference key="8">
    <citation type="journal article" date="2009" name="Science">
        <title>Global analysis of Cdk1 substrate phosphorylation sites provides insights into evolution.</title>
        <authorList>
            <person name="Holt L.J."/>
            <person name="Tuch B.B."/>
            <person name="Villen J."/>
            <person name="Johnson A.D."/>
            <person name="Gygi S.P."/>
            <person name="Morgan D.O."/>
        </authorList>
    </citation>
    <scope>PHOSPHORYLATION [LARGE SCALE ANALYSIS] AT SER-223; SER-228; THR-232 AND THR-244</scope>
    <scope>IDENTIFICATION BY MASS SPECTROMETRY [LARGE SCALE ANALYSIS]</scope>
</reference>
<reference key="9">
    <citation type="journal article" date="2012" name="Proteomics">
        <title>Sites of ubiquitin attachment in Saccharomyces cerevisiae.</title>
        <authorList>
            <person name="Starita L.M."/>
            <person name="Lo R.S."/>
            <person name="Eng J.K."/>
            <person name="von Haller P.D."/>
            <person name="Fields S."/>
        </authorList>
    </citation>
    <scope>UBIQUITINATION [LARGE SCALE ANALYSIS] AT LYS-276</scope>
    <scope>IDENTIFICATION BY MASS SPECTROMETRY [LARGE SCALE ANALYSIS]</scope>
</reference>
<reference key="10">
    <citation type="journal article" date="2015" name="Mol. Microbiol.">
        <title>Identification of Dck1 and Lmo1 as upstream regulators of the small GTPase Rho5 in Saccharomyces cerevisiae.</title>
        <authorList>
            <person name="Schmitz H.P."/>
            <person name="Jendretzki A."/>
            <person name="Wittland J."/>
            <person name="Wiechert J."/>
            <person name="Heinisch J.J."/>
        </authorList>
    </citation>
    <scope>FUNCTION</scope>
    <scope>DISRUPTION PHENOTYPE</scope>
    <scope>SUBCELLULAR LOCATION</scope>
</reference>
<evidence type="ECO:0000250" key="1"/>
<evidence type="ECO:0000250" key="2">
    <source>
        <dbReference type="UniProtKB" id="Q96HU8"/>
    </source>
</evidence>
<evidence type="ECO:0000250" key="3">
    <source>
        <dbReference type="UniProtKB" id="Q9H0U4"/>
    </source>
</evidence>
<evidence type="ECO:0000256" key="4">
    <source>
        <dbReference type="SAM" id="MobiDB-lite"/>
    </source>
</evidence>
<evidence type="ECO:0000269" key="5">
    <source>
    </source>
</evidence>
<evidence type="ECO:0000269" key="6">
    <source>
    </source>
</evidence>
<evidence type="ECO:0000269" key="7">
    <source>
    </source>
</evidence>
<evidence type="ECO:0000269" key="8">
    <source>
    </source>
</evidence>
<evidence type="ECO:0000303" key="9">
    <source>
    </source>
</evidence>
<evidence type="ECO:0000305" key="10"/>
<evidence type="ECO:0007744" key="11">
    <source>
    </source>
</evidence>
<evidence type="ECO:0007744" key="12">
    <source>
    </source>
</evidence>
<evidence type="ECO:0007744" key="13">
    <source>
    </source>
</evidence>
<evidence type="ECO:0007744" key="14">
    <source>
    </source>
</evidence>
<gene>
    <name evidence="9" type="primary">RHO5</name>
    <name type="ordered locus">YNL180C</name>
    <name type="ORF">N1644</name>
</gene>
<proteinExistence type="evidence at protein level"/>
<organism>
    <name type="scientific">Saccharomyces cerevisiae (strain ATCC 204508 / S288c)</name>
    <name type="common">Baker's yeast</name>
    <dbReference type="NCBI Taxonomy" id="559292"/>
    <lineage>
        <taxon>Eukaryota</taxon>
        <taxon>Fungi</taxon>
        <taxon>Dikarya</taxon>
        <taxon>Ascomycota</taxon>
        <taxon>Saccharomycotina</taxon>
        <taxon>Saccharomycetes</taxon>
        <taxon>Saccharomycetales</taxon>
        <taxon>Saccharomycetaceae</taxon>
        <taxon>Saccharomyces</taxon>
    </lineage>
</organism>
<comment type="function">
    <text evidence="6 8">Small GTPase that negatively regulates a MAP kinase branch, downstream of SLT2, of the PKC1-mediated signal transduction pathway (PubMed:12118069). With its specific guanine nucleotide exchange factor (GEF), the heterodimeric complex DCK1/LMO1, relocates to mitochondria upon oxidative stress and triggers cell death (PubMed:25598154). The DCK1/LMO1/RHO5 signaling module that mediates mitochondrial turnover under nitrogen starvation conditions via mitophagy (PubMed:25598154). The DCK1/LMO1/RHO5 signaling module also plays a role in cell wall integrity signaling (PubMed:25598154).</text>
</comment>
<comment type="subunit">
    <text evidence="5">Interacts with RGD2.</text>
</comment>
<comment type="interaction">
    <interactant intactId="EBI-29054">
        <id>P53879</id>
    </interactant>
    <interactant intactId="EBI-19497">
        <id>P29509</id>
        <label>TRR1</label>
    </interactant>
    <organismsDiffer>false</organismsDiffer>
    <experiments>4</experiments>
</comment>
<comment type="subcellular location">
    <subcellularLocation>
        <location evidence="10">Membrane</location>
        <topology evidence="10">Lipid-anchor</topology>
    </subcellularLocation>
    <subcellularLocation>
        <location evidence="8">Mitochondrion</location>
    </subcellularLocation>
    <text evidence="8">Localization to mitochondria occurs upon oxidative stress and is dependent of DCK1 and LMO1.</text>
</comment>
<comment type="disruption phenotype">
    <text evidence="8">Leads to resistance to oxidants such as H(2)O(2) (PubMed:25598154). Impairs apoptotic phenotype after H(2)O(2) treatment (PubMed:25598154). Leads to hyper-resistance to cell wall stress agents such as calcofluor white and Congo red (PubMed:25598154).</text>
</comment>
<comment type="miscellaneous">
    <text evidence="7">Present with 2180 molecules/cell in log phase SD medium.</text>
</comment>
<comment type="similarity">
    <text evidence="10">Belongs to the small GTPase superfamily. Rho family.</text>
</comment>
<feature type="chain" id="PRO_0000198949" description="GTP-binding protein RHO5">
    <location>
        <begin position="1"/>
        <end position="328"/>
    </location>
</feature>
<feature type="propeptide" id="PRO_0000281279" description="Removed in mature form" evidence="1">
    <location>
        <begin position="329"/>
        <end position="331"/>
    </location>
</feature>
<feature type="region of interest" description="Disordered" evidence="4">
    <location>
        <begin position="51"/>
        <end position="76"/>
    </location>
</feature>
<feature type="region of interest" description="Disordered" evidence="4">
    <location>
        <begin position="239"/>
        <end position="331"/>
    </location>
</feature>
<feature type="compositionally biased region" description="Low complexity" evidence="4">
    <location>
        <begin position="66"/>
        <end position="75"/>
    </location>
</feature>
<feature type="compositionally biased region" description="Polar residues" evidence="4">
    <location>
        <begin position="258"/>
        <end position="273"/>
    </location>
</feature>
<feature type="compositionally biased region" description="Basic and acidic residues" evidence="4">
    <location>
        <begin position="287"/>
        <end position="297"/>
    </location>
</feature>
<feature type="compositionally biased region" description="Basic residues" evidence="4">
    <location>
        <begin position="308"/>
        <end position="331"/>
    </location>
</feature>
<feature type="binding site" evidence="2">
    <location>
        <begin position="10"/>
        <end position="17"/>
    </location>
    <ligand>
        <name>GTP</name>
        <dbReference type="ChEBI" id="CHEBI:37565"/>
    </ligand>
</feature>
<feature type="binding site" evidence="2">
    <location>
        <begin position="87"/>
        <end position="91"/>
    </location>
    <ligand>
        <name>GTP</name>
        <dbReference type="ChEBI" id="CHEBI:37565"/>
    </ligand>
</feature>
<feature type="binding site" evidence="2">
    <location>
        <begin position="156"/>
        <end position="159"/>
    </location>
    <ligand>
        <name>GTP</name>
        <dbReference type="ChEBI" id="CHEBI:37565"/>
    </ligand>
</feature>
<feature type="modified residue" description="Phosphoserine" evidence="11 12 13">
    <location>
        <position position="223"/>
    </location>
</feature>
<feature type="modified residue" description="Phosphoserine" evidence="13">
    <location>
        <position position="228"/>
    </location>
</feature>
<feature type="modified residue" description="Phosphothreonine" evidence="13">
    <location>
        <position position="232"/>
    </location>
</feature>
<feature type="modified residue" description="Phosphothreonine" evidence="13">
    <location>
        <position position="244"/>
    </location>
</feature>
<feature type="modified residue" description="Cysteine methyl ester" evidence="3">
    <location>
        <position position="328"/>
    </location>
</feature>
<feature type="lipid moiety-binding region" description="S-geranylgeranyl cysteine" evidence="3">
    <location>
        <position position="328"/>
    </location>
</feature>
<feature type="cross-link" description="Glycyl lysine isopeptide (Lys-Gly) (interchain with G-Cter in ubiquitin)" evidence="14">
    <location>
        <position position="276"/>
    </location>
</feature>
<feature type="mutagenesis site" description="Cells sensitive to calcofluor, caffeine and Congo red." evidence="6">
    <original>Q</original>
    <variation>H</variation>
    <location>
        <position position="91"/>
    </location>
</feature>
<name>RHO5_YEAST</name>
<accession>P53879</accession>
<accession>D6W106</accession>
<sequence>MRSIKCVIIGDGAVGKTSLLISYTTNSFPTDYVPTVFDNYSTTIAIPNGTASSPLELDNGNDKRGSLSSASSSPSTDRKLYKINLWDTAGQEDYDRLRPLCYPQTDIFLICFSVSEHASFANVTEKWLPELKQTSNIEGTSLYTKLGKYPILLVGTKSDLRDDPATQKKLQEANSDYVSQEEIDELVQRCGFMGYTECSAATQAGVREVFEQAVRYAIYEPESPNQKSANHTLTDELTTATTNTNGDKNIREQKQQPHHNNSTDSTLPKGSLQQEKEALNIKPTKKGQKDKIHEQSKSKGSKIASNNHHNKQAKPKTRNDKKKKKSKCVIL</sequence>
<keyword id="KW-0342">GTP-binding</keyword>
<keyword id="KW-1017">Isopeptide bond</keyword>
<keyword id="KW-0449">Lipoprotein</keyword>
<keyword id="KW-0472">Membrane</keyword>
<keyword id="KW-0488">Methylation</keyword>
<keyword id="KW-0496">Mitochondrion</keyword>
<keyword id="KW-0547">Nucleotide-binding</keyword>
<keyword id="KW-0597">Phosphoprotein</keyword>
<keyword id="KW-0636">Prenylation</keyword>
<keyword id="KW-1185">Reference proteome</keyword>
<keyword id="KW-0832">Ubl conjugation</keyword>